<feature type="chain" id="PRO_1000117418" description="2-C-methyl-D-erythritol 2,4-cyclodiphosphate synthase">
    <location>
        <begin position="1"/>
        <end position="158"/>
    </location>
</feature>
<feature type="binding site" evidence="1">
    <location>
        <begin position="9"/>
        <end position="11"/>
    </location>
    <ligand>
        <name>4-CDP-2-C-methyl-D-erythritol 2-phosphate</name>
        <dbReference type="ChEBI" id="CHEBI:57919"/>
    </ligand>
</feature>
<feature type="binding site" evidence="1">
    <location>
        <position position="9"/>
    </location>
    <ligand>
        <name>a divalent metal cation</name>
        <dbReference type="ChEBI" id="CHEBI:60240"/>
    </ligand>
</feature>
<feature type="binding site" evidence="1">
    <location>
        <position position="11"/>
    </location>
    <ligand>
        <name>a divalent metal cation</name>
        <dbReference type="ChEBI" id="CHEBI:60240"/>
    </ligand>
</feature>
<feature type="binding site" evidence="1">
    <location>
        <begin position="35"/>
        <end position="36"/>
    </location>
    <ligand>
        <name>4-CDP-2-C-methyl-D-erythritol 2-phosphate</name>
        <dbReference type="ChEBI" id="CHEBI:57919"/>
    </ligand>
</feature>
<feature type="binding site" evidence="1">
    <location>
        <position position="43"/>
    </location>
    <ligand>
        <name>a divalent metal cation</name>
        <dbReference type="ChEBI" id="CHEBI:60240"/>
    </ligand>
</feature>
<feature type="binding site" evidence="1">
    <location>
        <begin position="57"/>
        <end position="59"/>
    </location>
    <ligand>
        <name>4-CDP-2-C-methyl-D-erythritol 2-phosphate</name>
        <dbReference type="ChEBI" id="CHEBI:57919"/>
    </ligand>
</feature>
<feature type="binding site" evidence="1">
    <location>
        <begin position="62"/>
        <end position="66"/>
    </location>
    <ligand>
        <name>4-CDP-2-C-methyl-D-erythritol 2-phosphate</name>
        <dbReference type="ChEBI" id="CHEBI:57919"/>
    </ligand>
</feature>
<feature type="binding site" evidence="1">
    <location>
        <begin position="101"/>
        <end position="107"/>
    </location>
    <ligand>
        <name>4-CDP-2-C-methyl-D-erythritol 2-phosphate</name>
        <dbReference type="ChEBI" id="CHEBI:57919"/>
    </ligand>
</feature>
<feature type="binding site" evidence="1">
    <location>
        <begin position="133"/>
        <end position="136"/>
    </location>
    <ligand>
        <name>4-CDP-2-C-methyl-D-erythritol 2-phosphate</name>
        <dbReference type="ChEBI" id="CHEBI:57919"/>
    </ligand>
</feature>
<feature type="binding site" evidence="1">
    <location>
        <position position="140"/>
    </location>
    <ligand>
        <name>4-CDP-2-C-methyl-D-erythritol 2-phosphate</name>
        <dbReference type="ChEBI" id="CHEBI:57919"/>
    </ligand>
</feature>
<feature type="binding site" evidence="1">
    <location>
        <position position="143"/>
    </location>
    <ligand>
        <name>4-CDP-2-C-methyl-D-erythritol 2-phosphate</name>
        <dbReference type="ChEBI" id="CHEBI:57919"/>
    </ligand>
</feature>
<feature type="site" description="Transition state stabilizer" evidence="1">
    <location>
        <position position="35"/>
    </location>
</feature>
<feature type="site" description="Transition state stabilizer" evidence="1">
    <location>
        <position position="134"/>
    </location>
</feature>
<evidence type="ECO:0000255" key="1">
    <source>
        <dbReference type="HAMAP-Rule" id="MF_00107"/>
    </source>
</evidence>
<protein>
    <recommendedName>
        <fullName evidence="1">2-C-methyl-D-erythritol 2,4-cyclodiphosphate synthase</fullName>
        <shortName evidence="1">MECDP-synthase</shortName>
        <shortName evidence="1">MECPP-synthase</shortName>
        <shortName evidence="1">MECPS</shortName>
        <ecNumber evidence="1">4.6.1.12</ecNumber>
    </recommendedName>
</protein>
<comment type="function">
    <text evidence="1">Involved in the biosynthesis of isopentenyl diphosphate (IPP) and dimethylallyl diphosphate (DMAPP), two major building blocks of isoprenoid compounds. Catalyzes the conversion of 4-diphosphocytidyl-2-C-methyl-D-erythritol 2-phosphate (CDP-ME2P) to 2-C-methyl-D-erythritol 2,4-cyclodiphosphate (ME-CPP) with a corresponding release of cytidine 5-monophosphate (CMP).</text>
</comment>
<comment type="catalytic activity">
    <reaction evidence="1">
        <text>4-CDP-2-C-methyl-D-erythritol 2-phosphate = 2-C-methyl-D-erythritol 2,4-cyclic diphosphate + CMP</text>
        <dbReference type="Rhea" id="RHEA:23864"/>
        <dbReference type="ChEBI" id="CHEBI:57919"/>
        <dbReference type="ChEBI" id="CHEBI:58483"/>
        <dbReference type="ChEBI" id="CHEBI:60377"/>
        <dbReference type="EC" id="4.6.1.12"/>
    </reaction>
</comment>
<comment type="cofactor">
    <cofactor evidence="1">
        <name>a divalent metal cation</name>
        <dbReference type="ChEBI" id="CHEBI:60240"/>
    </cofactor>
    <text evidence="1">Binds 1 divalent metal cation per subunit.</text>
</comment>
<comment type="pathway">
    <text evidence="1">Isoprenoid biosynthesis; isopentenyl diphosphate biosynthesis via DXP pathway; isopentenyl diphosphate from 1-deoxy-D-xylulose 5-phosphate: step 4/6.</text>
</comment>
<comment type="subunit">
    <text evidence="1">Homotrimer.</text>
</comment>
<comment type="similarity">
    <text evidence="1">Belongs to the IspF family.</text>
</comment>
<accession>B7ISZ6</accession>
<dbReference type="EC" id="4.6.1.12" evidence="1"/>
<dbReference type="EMBL" id="CP001186">
    <property type="protein sequence ID" value="ACK97928.1"/>
    <property type="molecule type" value="Genomic_DNA"/>
</dbReference>
<dbReference type="RefSeq" id="WP_000488386.1">
    <property type="nucleotide sequence ID" value="NC_011772.1"/>
</dbReference>
<dbReference type="SMR" id="B7ISZ6"/>
<dbReference type="GeneID" id="93010967"/>
<dbReference type="KEGG" id="bcg:BCG9842_B5219"/>
<dbReference type="HOGENOM" id="CLU_084630_2_0_9"/>
<dbReference type="UniPathway" id="UPA00056">
    <property type="reaction ID" value="UER00095"/>
</dbReference>
<dbReference type="Proteomes" id="UP000006744">
    <property type="component" value="Chromosome"/>
</dbReference>
<dbReference type="GO" id="GO:0008685">
    <property type="term" value="F:2-C-methyl-D-erythritol 2,4-cyclodiphosphate synthase activity"/>
    <property type="evidence" value="ECO:0007669"/>
    <property type="project" value="UniProtKB-UniRule"/>
</dbReference>
<dbReference type="GO" id="GO:0046872">
    <property type="term" value="F:metal ion binding"/>
    <property type="evidence" value="ECO:0007669"/>
    <property type="project" value="UniProtKB-KW"/>
</dbReference>
<dbReference type="GO" id="GO:0019288">
    <property type="term" value="P:isopentenyl diphosphate biosynthetic process, methylerythritol 4-phosphate pathway"/>
    <property type="evidence" value="ECO:0007669"/>
    <property type="project" value="UniProtKB-UniRule"/>
</dbReference>
<dbReference type="GO" id="GO:0016114">
    <property type="term" value="P:terpenoid biosynthetic process"/>
    <property type="evidence" value="ECO:0007669"/>
    <property type="project" value="InterPro"/>
</dbReference>
<dbReference type="CDD" id="cd00554">
    <property type="entry name" value="MECDP_synthase"/>
    <property type="match status" value="1"/>
</dbReference>
<dbReference type="FunFam" id="3.30.1330.50:FF:000001">
    <property type="entry name" value="2-C-methyl-D-erythritol 2,4-cyclodiphosphate synthase"/>
    <property type="match status" value="1"/>
</dbReference>
<dbReference type="Gene3D" id="3.30.1330.50">
    <property type="entry name" value="2-C-methyl-D-erythritol 2,4-cyclodiphosphate synthase"/>
    <property type="match status" value="1"/>
</dbReference>
<dbReference type="HAMAP" id="MF_00107">
    <property type="entry name" value="IspF"/>
    <property type="match status" value="1"/>
</dbReference>
<dbReference type="InterPro" id="IPR003526">
    <property type="entry name" value="MECDP_synthase"/>
</dbReference>
<dbReference type="InterPro" id="IPR020555">
    <property type="entry name" value="MECDP_synthase_CS"/>
</dbReference>
<dbReference type="InterPro" id="IPR036571">
    <property type="entry name" value="MECDP_synthase_sf"/>
</dbReference>
<dbReference type="NCBIfam" id="TIGR00151">
    <property type="entry name" value="ispF"/>
    <property type="match status" value="1"/>
</dbReference>
<dbReference type="PANTHER" id="PTHR43181">
    <property type="entry name" value="2-C-METHYL-D-ERYTHRITOL 2,4-CYCLODIPHOSPHATE SYNTHASE, CHLOROPLASTIC"/>
    <property type="match status" value="1"/>
</dbReference>
<dbReference type="PANTHER" id="PTHR43181:SF1">
    <property type="entry name" value="2-C-METHYL-D-ERYTHRITOL 2,4-CYCLODIPHOSPHATE SYNTHASE, CHLOROPLASTIC"/>
    <property type="match status" value="1"/>
</dbReference>
<dbReference type="Pfam" id="PF02542">
    <property type="entry name" value="YgbB"/>
    <property type="match status" value="1"/>
</dbReference>
<dbReference type="SUPFAM" id="SSF69765">
    <property type="entry name" value="IpsF-like"/>
    <property type="match status" value="1"/>
</dbReference>
<dbReference type="PROSITE" id="PS01350">
    <property type="entry name" value="ISPF"/>
    <property type="match status" value="1"/>
</dbReference>
<name>ISPF_BACC2</name>
<gene>
    <name evidence="1" type="primary">ispF</name>
    <name type="ordered locus">BCG9842_B5219</name>
</gene>
<keyword id="KW-0414">Isoprene biosynthesis</keyword>
<keyword id="KW-0456">Lyase</keyword>
<keyword id="KW-0479">Metal-binding</keyword>
<reference key="1">
    <citation type="submission" date="2008-10" db="EMBL/GenBank/DDBJ databases">
        <title>Genome sequence of Bacillus cereus G9842.</title>
        <authorList>
            <person name="Dodson R.J."/>
            <person name="Durkin A.S."/>
            <person name="Rosovitz M.J."/>
            <person name="Rasko D.A."/>
            <person name="Hoffmaster A."/>
            <person name="Ravel J."/>
            <person name="Sutton G."/>
        </authorList>
    </citation>
    <scope>NUCLEOTIDE SEQUENCE [LARGE SCALE GENOMIC DNA]</scope>
    <source>
        <strain>G9842</strain>
    </source>
</reference>
<organism>
    <name type="scientific">Bacillus cereus (strain G9842)</name>
    <dbReference type="NCBI Taxonomy" id="405531"/>
    <lineage>
        <taxon>Bacteria</taxon>
        <taxon>Bacillati</taxon>
        <taxon>Bacillota</taxon>
        <taxon>Bacilli</taxon>
        <taxon>Bacillales</taxon>
        <taxon>Bacillaceae</taxon>
        <taxon>Bacillus</taxon>
        <taxon>Bacillus cereus group</taxon>
    </lineage>
</organism>
<proteinExistence type="inferred from homology"/>
<sequence>MFRIGQGFDVHEFAEGRPLIIGGITIPHEKGLIGHSDADVLLHTIADACLGAIAAGDIGKHFPDTDPAFKDADSAVLLQKVWEFVREQGYELGNLDCTIIAQKPKMAPHIESMRKRISELLETSIDNINVKATTTEKLGFTGREEGIASQAVVLLQKK</sequence>